<gene>
    <name evidence="1" type="primary">lipA</name>
    <name type="ordered locus">VF_0742</name>
</gene>
<sequence>MSKPIQMEKGVKYRDADKMALIPVKNMPTEQKEVLRKPEWMKIKLPASSKRIDDIKSAMRKNNLHSVCEEASCPNLAECFNHGTATFMILGAICTRRCPFCDVAHGRPVAPEAEEPKKLAKTIQDMKLKYVVITSVDRDDLRDGGAQHFADCNREIRALNPEIRIETLVPDFRGRMDRALEAMIDNPPDVFNHNLETAPRLYRKVRPGANYQWSLDLLKKFKEQHPNVPTKSGLMMGLGETKEEIVEVLKDLRAHGVTMLTLGQYLAPSRHHLPVERYVPPAEFDELKEIALELGFTHAACGPFVRSSYHADLQAKGEEVK</sequence>
<reference key="1">
    <citation type="journal article" date="2005" name="Proc. Natl. Acad. Sci. U.S.A.">
        <title>Complete genome sequence of Vibrio fischeri: a symbiotic bacterium with pathogenic congeners.</title>
        <authorList>
            <person name="Ruby E.G."/>
            <person name="Urbanowski M."/>
            <person name="Campbell J."/>
            <person name="Dunn A."/>
            <person name="Faini M."/>
            <person name="Gunsalus R."/>
            <person name="Lostroh P."/>
            <person name="Lupp C."/>
            <person name="McCann J."/>
            <person name="Millikan D."/>
            <person name="Schaefer A."/>
            <person name="Stabb E."/>
            <person name="Stevens A."/>
            <person name="Visick K."/>
            <person name="Whistler C."/>
            <person name="Greenberg E.P."/>
        </authorList>
    </citation>
    <scope>NUCLEOTIDE SEQUENCE [LARGE SCALE GENOMIC DNA]</scope>
    <source>
        <strain>ATCC 700601 / ES114</strain>
    </source>
</reference>
<feature type="chain" id="PRO_1000012294" description="Lipoyl synthase">
    <location>
        <begin position="1"/>
        <end position="321"/>
    </location>
</feature>
<feature type="domain" description="Radical SAM core" evidence="2">
    <location>
        <begin position="80"/>
        <end position="297"/>
    </location>
</feature>
<feature type="binding site" evidence="1">
    <location>
        <position position="68"/>
    </location>
    <ligand>
        <name>[4Fe-4S] cluster</name>
        <dbReference type="ChEBI" id="CHEBI:49883"/>
        <label>1</label>
    </ligand>
</feature>
<feature type="binding site" evidence="1">
    <location>
        <position position="73"/>
    </location>
    <ligand>
        <name>[4Fe-4S] cluster</name>
        <dbReference type="ChEBI" id="CHEBI:49883"/>
        <label>1</label>
    </ligand>
</feature>
<feature type="binding site" evidence="1">
    <location>
        <position position="79"/>
    </location>
    <ligand>
        <name>[4Fe-4S] cluster</name>
        <dbReference type="ChEBI" id="CHEBI:49883"/>
        <label>1</label>
    </ligand>
</feature>
<feature type="binding site" evidence="1">
    <location>
        <position position="94"/>
    </location>
    <ligand>
        <name>[4Fe-4S] cluster</name>
        <dbReference type="ChEBI" id="CHEBI:49883"/>
        <label>2</label>
        <note>4Fe-4S-S-AdoMet</note>
    </ligand>
</feature>
<feature type="binding site" evidence="1">
    <location>
        <position position="98"/>
    </location>
    <ligand>
        <name>[4Fe-4S] cluster</name>
        <dbReference type="ChEBI" id="CHEBI:49883"/>
        <label>2</label>
        <note>4Fe-4S-S-AdoMet</note>
    </ligand>
</feature>
<feature type="binding site" evidence="1">
    <location>
        <position position="101"/>
    </location>
    <ligand>
        <name>[4Fe-4S] cluster</name>
        <dbReference type="ChEBI" id="CHEBI:49883"/>
        <label>2</label>
        <note>4Fe-4S-S-AdoMet</note>
    </ligand>
</feature>
<feature type="binding site" evidence="1">
    <location>
        <position position="308"/>
    </location>
    <ligand>
        <name>[4Fe-4S] cluster</name>
        <dbReference type="ChEBI" id="CHEBI:49883"/>
        <label>1</label>
    </ligand>
</feature>
<evidence type="ECO:0000255" key="1">
    <source>
        <dbReference type="HAMAP-Rule" id="MF_00206"/>
    </source>
</evidence>
<evidence type="ECO:0000255" key="2">
    <source>
        <dbReference type="PROSITE-ProRule" id="PRU01266"/>
    </source>
</evidence>
<keyword id="KW-0004">4Fe-4S</keyword>
<keyword id="KW-0963">Cytoplasm</keyword>
<keyword id="KW-0408">Iron</keyword>
<keyword id="KW-0411">Iron-sulfur</keyword>
<keyword id="KW-0479">Metal-binding</keyword>
<keyword id="KW-1185">Reference proteome</keyword>
<keyword id="KW-0949">S-adenosyl-L-methionine</keyword>
<keyword id="KW-0808">Transferase</keyword>
<accession>Q5E6V9</accession>
<protein>
    <recommendedName>
        <fullName evidence="1">Lipoyl synthase</fullName>
        <ecNumber evidence="1">2.8.1.8</ecNumber>
    </recommendedName>
    <alternativeName>
        <fullName evidence="1">Lip-syn</fullName>
        <shortName evidence="1">LS</shortName>
    </alternativeName>
    <alternativeName>
        <fullName evidence="1">Lipoate synthase</fullName>
    </alternativeName>
    <alternativeName>
        <fullName evidence="1">Lipoic acid synthase</fullName>
    </alternativeName>
    <alternativeName>
        <fullName evidence="1">Sulfur insertion protein LipA</fullName>
    </alternativeName>
</protein>
<name>LIPA_ALIF1</name>
<comment type="function">
    <text evidence="1">Catalyzes the radical-mediated insertion of two sulfur atoms into the C-6 and C-8 positions of the octanoyl moiety bound to the lipoyl domains of lipoate-dependent enzymes, thereby converting the octanoylated domains into lipoylated derivatives.</text>
</comment>
<comment type="catalytic activity">
    <reaction evidence="1">
        <text>[[Fe-S] cluster scaffold protein carrying a second [4Fe-4S](2+) cluster] + N(6)-octanoyl-L-lysyl-[protein] + 2 oxidized [2Fe-2S]-[ferredoxin] + 2 S-adenosyl-L-methionine + 4 H(+) = [[Fe-S] cluster scaffold protein] + N(6)-[(R)-dihydrolipoyl]-L-lysyl-[protein] + 4 Fe(3+) + 2 hydrogen sulfide + 2 5'-deoxyadenosine + 2 L-methionine + 2 reduced [2Fe-2S]-[ferredoxin]</text>
        <dbReference type="Rhea" id="RHEA:16585"/>
        <dbReference type="Rhea" id="RHEA-COMP:9928"/>
        <dbReference type="Rhea" id="RHEA-COMP:10000"/>
        <dbReference type="Rhea" id="RHEA-COMP:10001"/>
        <dbReference type="Rhea" id="RHEA-COMP:10475"/>
        <dbReference type="Rhea" id="RHEA-COMP:14568"/>
        <dbReference type="Rhea" id="RHEA-COMP:14569"/>
        <dbReference type="ChEBI" id="CHEBI:15378"/>
        <dbReference type="ChEBI" id="CHEBI:17319"/>
        <dbReference type="ChEBI" id="CHEBI:29034"/>
        <dbReference type="ChEBI" id="CHEBI:29919"/>
        <dbReference type="ChEBI" id="CHEBI:33722"/>
        <dbReference type="ChEBI" id="CHEBI:33737"/>
        <dbReference type="ChEBI" id="CHEBI:33738"/>
        <dbReference type="ChEBI" id="CHEBI:57844"/>
        <dbReference type="ChEBI" id="CHEBI:59789"/>
        <dbReference type="ChEBI" id="CHEBI:78809"/>
        <dbReference type="ChEBI" id="CHEBI:83100"/>
        <dbReference type="EC" id="2.8.1.8"/>
    </reaction>
</comment>
<comment type="cofactor">
    <cofactor evidence="1">
        <name>[4Fe-4S] cluster</name>
        <dbReference type="ChEBI" id="CHEBI:49883"/>
    </cofactor>
    <text evidence="1">Binds 2 [4Fe-4S] clusters per subunit. One cluster is coordinated with 3 cysteines and an exchangeable S-adenosyl-L-methionine.</text>
</comment>
<comment type="pathway">
    <text evidence="1">Protein modification; protein lipoylation via endogenous pathway; protein N(6)-(lipoyl)lysine from octanoyl-[acyl-carrier-protein]: step 2/2.</text>
</comment>
<comment type="subcellular location">
    <subcellularLocation>
        <location evidence="1">Cytoplasm</location>
    </subcellularLocation>
</comment>
<comment type="similarity">
    <text evidence="1">Belongs to the radical SAM superfamily. Lipoyl synthase family.</text>
</comment>
<dbReference type="EC" id="2.8.1.8" evidence="1"/>
<dbReference type="EMBL" id="CP000020">
    <property type="protein sequence ID" value="AAW85237.1"/>
    <property type="molecule type" value="Genomic_DNA"/>
</dbReference>
<dbReference type="RefSeq" id="WP_011261451.1">
    <property type="nucleotide sequence ID" value="NZ_CAWLES010000001.1"/>
</dbReference>
<dbReference type="RefSeq" id="YP_204125.1">
    <property type="nucleotide sequence ID" value="NC_006840.2"/>
</dbReference>
<dbReference type="SMR" id="Q5E6V9"/>
<dbReference type="STRING" id="312309.VF_0742"/>
<dbReference type="EnsemblBacteria" id="AAW85237">
    <property type="protein sequence ID" value="AAW85237"/>
    <property type="gene ID" value="VF_0742"/>
</dbReference>
<dbReference type="GeneID" id="54163396"/>
<dbReference type="KEGG" id="vfi:VF_0742"/>
<dbReference type="PATRIC" id="fig|312309.11.peg.735"/>
<dbReference type="eggNOG" id="COG0320">
    <property type="taxonomic scope" value="Bacteria"/>
</dbReference>
<dbReference type="HOGENOM" id="CLU_033144_2_1_6"/>
<dbReference type="OrthoDB" id="9787898at2"/>
<dbReference type="UniPathway" id="UPA00538">
    <property type="reaction ID" value="UER00593"/>
</dbReference>
<dbReference type="Proteomes" id="UP000000537">
    <property type="component" value="Chromosome I"/>
</dbReference>
<dbReference type="GO" id="GO:0005737">
    <property type="term" value="C:cytoplasm"/>
    <property type="evidence" value="ECO:0007669"/>
    <property type="project" value="UniProtKB-SubCell"/>
</dbReference>
<dbReference type="GO" id="GO:0051539">
    <property type="term" value="F:4 iron, 4 sulfur cluster binding"/>
    <property type="evidence" value="ECO:0007669"/>
    <property type="project" value="UniProtKB-UniRule"/>
</dbReference>
<dbReference type="GO" id="GO:0016992">
    <property type="term" value="F:lipoate synthase activity"/>
    <property type="evidence" value="ECO:0007669"/>
    <property type="project" value="UniProtKB-UniRule"/>
</dbReference>
<dbReference type="GO" id="GO:0046872">
    <property type="term" value="F:metal ion binding"/>
    <property type="evidence" value="ECO:0007669"/>
    <property type="project" value="UniProtKB-KW"/>
</dbReference>
<dbReference type="CDD" id="cd01335">
    <property type="entry name" value="Radical_SAM"/>
    <property type="match status" value="1"/>
</dbReference>
<dbReference type="FunFam" id="3.20.20.70:FF:000023">
    <property type="entry name" value="Lipoyl synthase"/>
    <property type="match status" value="1"/>
</dbReference>
<dbReference type="Gene3D" id="3.20.20.70">
    <property type="entry name" value="Aldolase class I"/>
    <property type="match status" value="1"/>
</dbReference>
<dbReference type="HAMAP" id="MF_00206">
    <property type="entry name" value="Lipoyl_synth"/>
    <property type="match status" value="1"/>
</dbReference>
<dbReference type="InterPro" id="IPR013785">
    <property type="entry name" value="Aldolase_TIM"/>
</dbReference>
<dbReference type="InterPro" id="IPR006638">
    <property type="entry name" value="Elp3/MiaA/NifB-like_rSAM"/>
</dbReference>
<dbReference type="InterPro" id="IPR031691">
    <property type="entry name" value="LIAS_N"/>
</dbReference>
<dbReference type="InterPro" id="IPR003698">
    <property type="entry name" value="Lipoyl_synth"/>
</dbReference>
<dbReference type="InterPro" id="IPR007197">
    <property type="entry name" value="rSAM"/>
</dbReference>
<dbReference type="NCBIfam" id="TIGR00510">
    <property type="entry name" value="lipA"/>
    <property type="match status" value="1"/>
</dbReference>
<dbReference type="NCBIfam" id="NF004019">
    <property type="entry name" value="PRK05481.1"/>
    <property type="match status" value="1"/>
</dbReference>
<dbReference type="NCBIfam" id="NF009544">
    <property type="entry name" value="PRK12928.1"/>
    <property type="match status" value="1"/>
</dbReference>
<dbReference type="PANTHER" id="PTHR10949">
    <property type="entry name" value="LIPOYL SYNTHASE"/>
    <property type="match status" value="1"/>
</dbReference>
<dbReference type="PANTHER" id="PTHR10949:SF0">
    <property type="entry name" value="LIPOYL SYNTHASE, MITOCHONDRIAL"/>
    <property type="match status" value="1"/>
</dbReference>
<dbReference type="Pfam" id="PF16881">
    <property type="entry name" value="LIAS_N"/>
    <property type="match status" value="1"/>
</dbReference>
<dbReference type="Pfam" id="PF04055">
    <property type="entry name" value="Radical_SAM"/>
    <property type="match status" value="1"/>
</dbReference>
<dbReference type="PIRSF" id="PIRSF005963">
    <property type="entry name" value="Lipoyl_synth"/>
    <property type="match status" value="1"/>
</dbReference>
<dbReference type="SFLD" id="SFLDF00271">
    <property type="entry name" value="lipoyl_synthase"/>
    <property type="match status" value="1"/>
</dbReference>
<dbReference type="SFLD" id="SFLDG01058">
    <property type="entry name" value="lipoyl_synthase_like"/>
    <property type="match status" value="1"/>
</dbReference>
<dbReference type="SMART" id="SM00729">
    <property type="entry name" value="Elp3"/>
    <property type="match status" value="1"/>
</dbReference>
<dbReference type="SUPFAM" id="SSF102114">
    <property type="entry name" value="Radical SAM enzymes"/>
    <property type="match status" value="1"/>
</dbReference>
<dbReference type="PROSITE" id="PS51918">
    <property type="entry name" value="RADICAL_SAM"/>
    <property type="match status" value="1"/>
</dbReference>
<organism>
    <name type="scientific">Aliivibrio fischeri (strain ATCC 700601 / ES114)</name>
    <name type="common">Vibrio fischeri</name>
    <dbReference type="NCBI Taxonomy" id="312309"/>
    <lineage>
        <taxon>Bacteria</taxon>
        <taxon>Pseudomonadati</taxon>
        <taxon>Pseudomonadota</taxon>
        <taxon>Gammaproteobacteria</taxon>
        <taxon>Vibrionales</taxon>
        <taxon>Vibrionaceae</taxon>
        <taxon>Aliivibrio</taxon>
    </lineage>
</organism>
<proteinExistence type="inferred from homology"/>